<sequence length="243" mass="27543">MQITLPGVVLTNSPAEKQHVIVKIFSPAGLLSAFAKNGASLSCDFRESLFPISFSLFTIQQSPPKMRKVIQGELQNPFTTIKSSYPLLQSAGKMIQAILKTQWHEKPSPHLFSLFFNFLQRIPETQYPNFFSSMFLLKLLQHEGSLDLSRSCTLCKTSLESSTIYRYEGALFCEKHAHEETISFSQEEDHILRVIVQAKKFQELVCLAEFPIDIDTKIDALFSSFLSETSEPSSLYYKGKTLL</sequence>
<comment type="function">
    <text evidence="1">Involved in DNA repair and RecF pathway recombination.</text>
</comment>
<comment type="similarity">
    <text evidence="1">Belongs to the RecO family.</text>
</comment>
<evidence type="ECO:0000255" key="1">
    <source>
        <dbReference type="HAMAP-Rule" id="MF_00201"/>
    </source>
</evidence>
<gene>
    <name evidence="1" type="primary">recO</name>
    <name type="ordered locus">CTLon_0726</name>
</gene>
<keyword id="KW-0227">DNA damage</keyword>
<keyword id="KW-0233">DNA recombination</keyword>
<keyword id="KW-0234">DNA repair</keyword>
<reference key="1">
    <citation type="journal article" date="2008" name="Genome Res.">
        <title>Chlamydia trachomatis: genome sequence analysis of lymphogranuloma venereum isolates.</title>
        <authorList>
            <person name="Thomson N.R."/>
            <person name="Holden M.T.G."/>
            <person name="Carder C."/>
            <person name="Lennard N."/>
            <person name="Lockey S.J."/>
            <person name="Marsh P."/>
            <person name="Skipp P."/>
            <person name="O'Connor C.D."/>
            <person name="Goodhead I."/>
            <person name="Norbertzcak H."/>
            <person name="Harris B."/>
            <person name="Ormond D."/>
            <person name="Rance R."/>
            <person name="Quail M.A."/>
            <person name="Parkhill J."/>
            <person name="Stephens R.S."/>
            <person name="Clarke I.N."/>
        </authorList>
    </citation>
    <scope>NUCLEOTIDE SEQUENCE [LARGE SCALE GENOMIC DNA]</scope>
    <source>
        <strain>UCH-1/proctitis</strain>
    </source>
</reference>
<accession>B0BCA8</accession>
<organism>
    <name type="scientific">Chlamydia trachomatis serovar L2b (strain UCH-1/proctitis)</name>
    <dbReference type="NCBI Taxonomy" id="471473"/>
    <lineage>
        <taxon>Bacteria</taxon>
        <taxon>Pseudomonadati</taxon>
        <taxon>Chlamydiota</taxon>
        <taxon>Chlamydiia</taxon>
        <taxon>Chlamydiales</taxon>
        <taxon>Chlamydiaceae</taxon>
        <taxon>Chlamydia/Chlamydophila group</taxon>
        <taxon>Chlamydia</taxon>
    </lineage>
</organism>
<name>RECO_CHLTB</name>
<feature type="chain" id="PRO_1000099373" description="DNA repair protein RecO">
    <location>
        <begin position="1"/>
        <end position="243"/>
    </location>
</feature>
<proteinExistence type="inferred from homology"/>
<protein>
    <recommendedName>
        <fullName evidence="1">DNA repair protein RecO</fullName>
    </recommendedName>
    <alternativeName>
        <fullName evidence="1">Recombination protein O</fullName>
    </alternativeName>
</protein>
<dbReference type="EMBL" id="AM884177">
    <property type="protein sequence ID" value="CAP07123.1"/>
    <property type="molecule type" value="Genomic_DNA"/>
</dbReference>
<dbReference type="RefSeq" id="WP_009873835.1">
    <property type="nucleotide sequence ID" value="NC_010280.2"/>
</dbReference>
<dbReference type="SMR" id="B0BCA8"/>
<dbReference type="KEGG" id="ctl:CTLon_0726"/>
<dbReference type="HOGENOM" id="CLU_1122990_0_0_0"/>
<dbReference type="Proteomes" id="UP001154401">
    <property type="component" value="Chromosome"/>
</dbReference>
<dbReference type="GO" id="GO:0043590">
    <property type="term" value="C:bacterial nucleoid"/>
    <property type="evidence" value="ECO:0007669"/>
    <property type="project" value="TreeGrafter"/>
</dbReference>
<dbReference type="GO" id="GO:0006310">
    <property type="term" value="P:DNA recombination"/>
    <property type="evidence" value="ECO:0007669"/>
    <property type="project" value="UniProtKB-UniRule"/>
</dbReference>
<dbReference type="GO" id="GO:0006302">
    <property type="term" value="P:double-strand break repair"/>
    <property type="evidence" value="ECO:0007669"/>
    <property type="project" value="TreeGrafter"/>
</dbReference>
<dbReference type="HAMAP" id="MF_00201">
    <property type="entry name" value="RecO"/>
    <property type="match status" value="1"/>
</dbReference>
<dbReference type="InterPro" id="IPR037278">
    <property type="entry name" value="ARFGAP/RecO"/>
</dbReference>
<dbReference type="InterPro" id="IPR012340">
    <property type="entry name" value="NA-bd_OB-fold"/>
</dbReference>
<dbReference type="InterPro" id="IPR003717">
    <property type="entry name" value="RecO"/>
</dbReference>
<dbReference type="NCBIfam" id="TIGR00613">
    <property type="entry name" value="reco"/>
    <property type="match status" value="1"/>
</dbReference>
<dbReference type="PANTHER" id="PTHR33991">
    <property type="entry name" value="DNA REPAIR PROTEIN RECO"/>
    <property type="match status" value="1"/>
</dbReference>
<dbReference type="PANTHER" id="PTHR33991:SF1">
    <property type="entry name" value="DNA REPAIR PROTEIN RECO"/>
    <property type="match status" value="1"/>
</dbReference>
<dbReference type="Pfam" id="PF02565">
    <property type="entry name" value="RecO_C"/>
    <property type="match status" value="1"/>
</dbReference>
<dbReference type="SUPFAM" id="SSF57863">
    <property type="entry name" value="ArfGap/RecO-like zinc finger"/>
    <property type="match status" value="1"/>
</dbReference>
<dbReference type="SUPFAM" id="SSF50249">
    <property type="entry name" value="Nucleic acid-binding proteins"/>
    <property type="match status" value="1"/>
</dbReference>